<evidence type="ECO:0000250" key="1">
    <source>
        <dbReference type="UniProtKB" id="P83731"/>
    </source>
</evidence>
<evidence type="ECO:0000256" key="2">
    <source>
        <dbReference type="SAM" id="MobiDB-lite"/>
    </source>
</evidence>
<evidence type="ECO:0000305" key="3"/>
<feature type="chain" id="PRO_0000136874" description="Large ribosomal subunit protein eL24">
    <location>
        <begin position="1"/>
        <end position="157"/>
    </location>
</feature>
<feature type="region of interest" description="Disordered" evidence="2">
    <location>
        <begin position="94"/>
        <end position="157"/>
    </location>
</feature>
<feature type="compositionally biased region" description="Basic and acidic residues" evidence="2">
    <location>
        <begin position="96"/>
        <end position="117"/>
    </location>
</feature>
<feature type="compositionally biased region" description="Low complexity" evidence="2">
    <location>
        <begin position="123"/>
        <end position="140"/>
    </location>
</feature>
<organism>
    <name type="scientific">Pagrus major</name>
    <name type="common">Red sea bream</name>
    <name type="synonym">Chrysophrys major</name>
    <dbReference type="NCBI Taxonomy" id="143350"/>
    <lineage>
        <taxon>Eukaryota</taxon>
        <taxon>Metazoa</taxon>
        <taxon>Chordata</taxon>
        <taxon>Craniata</taxon>
        <taxon>Vertebrata</taxon>
        <taxon>Euteleostomi</taxon>
        <taxon>Actinopterygii</taxon>
        <taxon>Neopterygii</taxon>
        <taxon>Teleostei</taxon>
        <taxon>Neoteleostei</taxon>
        <taxon>Acanthomorphata</taxon>
        <taxon>Eupercaria</taxon>
        <taxon>Spariformes</taxon>
        <taxon>Sparidae</taxon>
        <taxon>Pagrus</taxon>
    </lineage>
</organism>
<accession>Q6Y263</accession>
<sequence length="157" mass="17718">MKVELCSFSGYKIYPGHGRRYARIDGKVFQFLNAKCESAFLAKRNPRQINWTVLYRRKHKKGQSEEVAKKRTRRAVKFQRAITGASLAEIMAKRNQKPEVRKAQREQAIRAAKEAKKAKQAAKKPAAPSAKASTKTAQKPKIAKPMKISAPRVGGKR</sequence>
<keyword id="KW-0963">Cytoplasm</keyword>
<keyword id="KW-0687">Ribonucleoprotein</keyword>
<keyword id="KW-0689">Ribosomal protein</keyword>
<gene>
    <name type="primary">rpl24</name>
</gene>
<comment type="function">
    <text evidence="1">Component of the large ribosomal subunit. The ribosome is a large ribonucleoprotein complex responsible for the synthesis of proteins in the cell.</text>
</comment>
<comment type="subunit">
    <text evidence="1">Component of the large ribosomal subunit.</text>
</comment>
<comment type="subcellular location">
    <subcellularLocation>
        <location evidence="1">Cytoplasm</location>
    </subcellularLocation>
</comment>
<comment type="similarity">
    <text evidence="3">Belongs to the eukaryotic ribosomal protein eL24 family.</text>
</comment>
<dbReference type="EMBL" id="AY190673">
    <property type="protein sequence ID" value="AAP20149.1"/>
    <property type="molecule type" value="mRNA"/>
</dbReference>
<dbReference type="SMR" id="Q6Y263"/>
<dbReference type="GO" id="GO:0022625">
    <property type="term" value="C:cytosolic large ribosomal subunit"/>
    <property type="evidence" value="ECO:0007669"/>
    <property type="project" value="TreeGrafter"/>
</dbReference>
<dbReference type="GO" id="GO:0003729">
    <property type="term" value="F:mRNA binding"/>
    <property type="evidence" value="ECO:0007669"/>
    <property type="project" value="TreeGrafter"/>
</dbReference>
<dbReference type="GO" id="GO:0003735">
    <property type="term" value="F:structural constituent of ribosome"/>
    <property type="evidence" value="ECO:0007669"/>
    <property type="project" value="InterPro"/>
</dbReference>
<dbReference type="GO" id="GO:0002181">
    <property type="term" value="P:cytoplasmic translation"/>
    <property type="evidence" value="ECO:0007669"/>
    <property type="project" value="TreeGrafter"/>
</dbReference>
<dbReference type="CDD" id="cd00472">
    <property type="entry name" value="Ribosomal_L24e_L24"/>
    <property type="match status" value="1"/>
</dbReference>
<dbReference type="FunFam" id="2.30.170.20:FF:000004">
    <property type="entry name" value="60S ribosomal protein l24"/>
    <property type="match status" value="1"/>
</dbReference>
<dbReference type="Gene3D" id="6.10.250.1270">
    <property type="match status" value="1"/>
</dbReference>
<dbReference type="Gene3D" id="2.30.170.20">
    <property type="entry name" value="Ribosomal protein L24e"/>
    <property type="match status" value="1"/>
</dbReference>
<dbReference type="InterPro" id="IPR038630">
    <property type="entry name" value="L24e/L24_sf"/>
</dbReference>
<dbReference type="InterPro" id="IPR056366">
    <property type="entry name" value="Ribosomal_eL24"/>
</dbReference>
<dbReference type="InterPro" id="IPR000988">
    <property type="entry name" value="Ribosomal_eL24-rel_N"/>
</dbReference>
<dbReference type="InterPro" id="IPR023442">
    <property type="entry name" value="Ribosomal_eL24_CS"/>
</dbReference>
<dbReference type="InterPro" id="IPR011017">
    <property type="entry name" value="TRASH_dom"/>
</dbReference>
<dbReference type="PANTHER" id="PTHR10792">
    <property type="entry name" value="60S RIBOSOMAL PROTEIN L24"/>
    <property type="match status" value="1"/>
</dbReference>
<dbReference type="PANTHER" id="PTHR10792:SF1">
    <property type="entry name" value="RIBOSOMAL PROTEIN L24"/>
    <property type="match status" value="1"/>
</dbReference>
<dbReference type="Pfam" id="PF01246">
    <property type="entry name" value="Ribosomal_L24e"/>
    <property type="match status" value="1"/>
</dbReference>
<dbReference type="SMART" id="SM00746">
    <property type="entry name" value="TRASH"/>
    <property type="match status" value="1"/>
</dbReference>
<dbReference type="SUPFAM" id="SSF57716">
    <property type="entry name" value="Glucocorticoid receptor-like (DNA-binding domain)"/>
    <property type="match status" value="1"/>
</dbReference>
<dbReference type="PROSITE" id="PS01073">
    <property type="entry name" value="RIBOSOMAL_L24E"/>
    <property type="match status" value="1"/>
</dbReference>
<reference key="1">
    <citation type="submission" date="2002-12" db="EMBL/GenBank/DDBJ databases">
        <title>Analysis of expressed genes in red sea bream (Chrysophrys major).</title>
        <authorList>
            <person name="Chen S.L."/>
            <person name="Xu M.Y."/>
        </authorList>
    </citation>
    <scope>NUCLEOTIDE SEQUENCE [MRNA]</scope>
    <source>
        <tissue>Spleen</tissue>
    </source>
</reference>
<name>RL24_PAGMA</name>
<proteinExistence type="evidence at transcript level"/>
<protein>
    <recommendedName>
        <fullName evidence="3">Large ribosomal subunit protein eL24</fullName>
    </recommendedName>
    <alternativeName>
        <fullName>60S ribosomal protein L24</fullName>
    </alternativeName>
</protein>